<sequence>MQWQTKLPLIAILRGITPDEALAHVGAVIDAGFDAVEIPLNSPQWEQSIPAIVDAYGDKALIGAGTVLKPEQVDALARMGCQLIVTPNIHSEVIRRAVGYGMTVCPGCATATEAFTALEAGAQALKIFPSSAFGPQYIKALKAVLPSDIAVFAVGGVTPENLAQWIDAGCAGAGLGSDLYRAGQSVERTAQQAAAFVKAYREAVQ</sequence>
<evidence type="ECO:0000269" key="1">
    <source>
    </source>
</evidence>
<evidence type="ECO:0000269" key="2">
    <source>
    </source>
</evidence>
<evidence type="ECO:0000269" key="3">
    <source>
    </source>
</evidence>
<evidence type="ECO:0000305" key="4"/>
<evidence type="ECO:0000305" key="5">
    <source>
    </source>
</evidence>
<evidence type="ECO:0007744" key="6">
    <source>
        <dbReference type="PDB" id="2V81"/>
    </source>
</evidence>
<evidence type="ECO:0007744" key="7">
    <source>
        <dbReference type="PDB" id="2V82"/>
    </source>
</evidence>
<evidence type="ECO:0007829" key="8">
    <source>
        <dbReference type="PDB" id="2V81"/>
    </source>
</evidence>
<evidence type="ECO:0007829" key="9">
    <source>
        <dbReference type="PDB" id="2V82"/>
    </source>
</evidence>
<dbReference type="EC" id="4.1.2.21" evidence="1"/>
<dbReference type="EMBL" id="L10328">
    <property type="protein sequence ID" value="AAA62044.1"/>
    <property type="status" value="ALT_FRAME"/>
    <property type="molecule type" value="Genomic_DNA"/>
</dbReference>
<dbReference type="EMBL" id="U00096">
    <property type="protein sequence ID" value="AAT48198.1"/>
    <property type="molecule type" value="Genomic_DNA"/>
</dbReference>
<dbReference type="EMBL" id="AP009048">
    <property type="protein sequence ID" value="BAE77601.1"/>
    <property type="molecule type" value="Genomic_DNA"/>
</dbReference>
<dbReference type="PIR" id="E65171">
    <property type="entry name" value="E65171"/>
</dbReference>
<dbReference type="RefSeq" id="WP_001198722.1">
    <property type="nucleotide sequence ID" value="NZ_SSZK01000035.1"/>
</dbReference>
<dbReference type="RefSeq" id="YP_026238.1">
    <property type="nucleotide sequence ID" value="NC_000913.3"/>
</dbReference>
<dbReference type="PDB" id="2V81">
    <property type="method" value="X-ray"/>
    <property type="resolution" value="2.40 A"/>
    <property type="chains" value="A=1-205"/>
</dbReference>
<dbReference type="PDB" id="2V82">
    <property type="method" value="X-ray"/>
    <property type="resolution" value="2.10 A"/>
    <property type="chains" value="A=1-205"/>
</dbReference>
<dbReference type="PDB" id="4QCC">
    <property type="method" value="X-ray"/>
    <property type="resolution" value="7.08 A"/>
    <property type="chains" value="A/B=1-203"/>
</dbReference>
<dbReference type="PDBsum" id="2V81"/>
<dbReference type="PDBsum" id="2V82"/>
<dbReference type="PDBsum" id="4QCC"/>
<dbReference type="SMR" id="Q6BF16"/>
<dbReference type="BioGRID" id="4260839">
    <property type="interactions" value="13"/>
</dbReference>
<dbReference type="FunCoup" id="Q6BF16">
    <property type="interactions" value="102"/>
</dbReference>
<dbReference type="STRING" id="511145.b4477"/>
<dbReference type="ChEMBL" id="CHEMBL4296324"/>
<dbReference type="PaxDb" id="511145-b4477"/>
<dbReference type="EnsemblBacteria" id="AAT48198">
    <property type="protein sequence ID" value="AAT48198"/>
    <property type="gene ID" value="b4477"/>
</dbReference>
<dbReference type="GeneID" id="2847766"/>
<dbReference type="KEGG" id="ecj:JW5628"/>
<dbReference type="KEGG" id="eco:b4477"/>
<dbReference type="KEGG" id="ecoc:C3026_20020"/>
<dbReference type="PATRIC" id="fig|1411691.4.peg.3010"/>
<dbReference type="EchoBASE" id="EB1667"/>
<dbReference type="eggNOG" id="COG0800">
    <property type="taxonomic scope" value="Bacteria"/>
</dbReference>
<dbReference type="HOGENOM" id="CLU_077795_2_1_6"/>
<dbReference type="InParanoid" id="Q6BF16"/>
<dbReference type="OMA" id="QWINAGC"/>
<dbReference type="OrthoDB" id="8590323at2"/>
<dbReference type="PhylomeDB" id="Q6BF16"/>
<dbReference type="BioCyc" id="EcoCyc:DEHYDDEOXPHOSGALACT-ALDOL-MONOMER"/>
<dbReference type="BioCyc" id="MetaCyc:DEHYDDEOXPHOSGALACT-ALDOL-MONOMER"/>
<dbReference type="BRENDA" id="4.1.2.21">
    <property type="organism ID" value="2026"/>
</dbReference>
<dbReference type="UniPathway" id="UPA00081">
    <property type="reaction ID" value="UER00520"/>
</dbReference>
<dbReference type="EvolutionaryTrace" id="Q6BF16"/>
<dbReference type="PRO" id="PR:Q6BF16"/>
<dbReference type="Proteomes" id="UP000000625">
    <property type="component" value="Chromosome"/>
</dbReference>
<dbReference type="GO" id="GO:0008674">
    <property type="term" value="F:2-dehydro-3-deoxy-6-phosphogalactonate aldolase activity"/>
    <property type="evidence" value="ECO:0000314"/>
    <property type="project" value="EcoCyc"/>
</dbReference>
<dbReference type="GO" id="GO:0034194">
    <property type="term" value="P:D-galactonate catabolic process"/>
    <property type="evidence" value="ECO:0000315"/>
    <property type="project" value="EcoCyc"/>
</dbReference>
<dbReference type="CDD" id="cd00452">
    <property type="entry name" value="KDPG_aldolase"/>
    <property type="match status" value="1"/>
</dbReference>
<dbReference type="Gene3D" id="3.20.20.70">
    <property type="entry name" value="Aldolase class I"/>
    <property type="match status" value="1"/>
</dbReference>
<dbReference type="InterPro" id="IPR000887">
    <property type="entry name" value="Aldlse_KDPG_KHG"/>
</dbReference>
<dbReference type="InterPro" id="IPR013785">
    <property type="entry name" value="Aldolase_TIM"/>
</dbReference>
<dbReference type="NCBIfam" id="NF006600">
    <property type="entry name" value="PRK09140.1"/>
    <property type="match status" value="1"/>
</dbReference>
<dbReference type="PANTHER" id="PTHR30246:SF1">
    <property type="entry name" value="2-DEHYDRO-3-DEOXY-6-PHOSPHOGALACTONATE ALDOLASE-RELATED"/>
    <property type="match status" value="1"/>
</dbReference>
<dbReference type="PANTHER" id="PTHR30246">
    <property type="entry name" value="2-KETO-3-DEOXY-6-PHOSPHOGLUCONATE ALDOLASE"/>
    <property type="match status" value="1"/>
</dbReference>
<dbReference type="Pfam" id="PF01081">
    <property type="entry name" value="Aldolase"/>
    <property type="match status" value="1"/>
</dbReference>
<dbReference type="SUPFAM" id="SSF51569">
    <property type="entry name" value="Aldolase"/>
    <property type="match status" value="1"/>
</dbReference>
<keyword id="KW-0002">3D-structure</keyword>
<keyword id="KW-0119">Carbohydrate metabolism</keyword>
<keyword id="KW-0456">Lyase</keyword>
<keyword id="KW-1185">Reference proteome</keyword>
<gene>
    <name type="primary">dgoA</name>
    <name type="synonym">yidU</name>
    <name type="ordered locus">b4477</name>
    <name type="ordered locus">JW5628</name>
</gene>
<organism>
    <name type="scientific">Escherichia coli (strain K12)</name>
    <dbReference type="NCBI Taxonomy" id="83333"/>
    <lineage>
        <taxon>Bacteria</taxon>
        <taxon>Pseudomonadati</taxon>
        <taxon>Pseudomonadota</taxon>
        <taxon>Gammaproteobacteria</taxon>
        <taxon>Enterobacterales</taxon>
        <taxon>Enterobacteriaceae</taxon>
        <taxon>Escherichia</taxon>
    </lineage>
</organism>
<name>DGOA_ECOLI</name>
<reference key="1">
    <citation type="journal article" date="1993" name="Genomics">
        <title>DNA sequence and analysis of 136 kilobases of the Escherichia coli genome: organizational symmetry around the origin of replication.</title>
        <authorList>
            <person name="Burland V.D."/>
            <person name="Plunkett G. III"/>
            <person name="Daniels D.L."/>
            <person name="Blattner F.R."/>
        </authorList>
    </citation>
    <scope>NUCLEOTIDE SEQUENCE [LARGE SCALE GENOMIC DNA]</scope>
    <source>
        <strain>K12 / MG1655 / ATCC 47076</strain>
    </source>
</reference>
<reference key="2">
    <citation type="journal article" date="1997" name="Science">
        <title>The complete genome sequence of Escherichia coli K-12.</title>
        <authorList>
            <person name="Blattner F.R."/>
            <person name="Plunkett G. III"/>
            <person name="Bloch C.A."/>
            <person name="Perna N.T."/>
            <person name="Burland V."/>
            <person name="Riley M."/>
            <person name="Collado-Vides J."/>
            <person name="Glasner J.D."/>
            <person name="Rode C.K."/>
            <person name="Mayhew G.F."/>
            <person name="Gregor J."/>
            <person name="Davis N.W."/>
            <person name="Kirkpatrick H.A."/>
            <person name="Goeden M.A."/>
            <person name="Rose D.J."/>
            <person name="Mau B."/>
            <person name="Shao Y."/>
        </authorList>
    </citation>
    <scope>NUCLEOTIDE SEQUENCE [LARGE SCALE GENOMIC DNA]</scope>
    <source>
        <strain>K12 / MG1655 / ATCC 47076</strain>
    </source>
</reference>
<reference key="3">
    <citation type="journal article" date="2006" name="Nucleic Acids Res.">
        <title>Escherichia coli K-12: a cooperatively developed annotation snapshot -- 2005.</title>
        <authorList>
            <person name="Riley M."/>
            <person name="Abe T."/>
            <person name="Arnaud M.B."/>
            <person name="Berlyn M.K.B."/>
            <person name="Blattner F.R."/>
            <person name="Chaudhuri R.R."/>
            <person name="Glasner J.D."/>
            <person name="Horiuchi T."/>
            <person name="Keseler I.M."/>
            <person name="Kosuge T."/>
            <person name="Mori H."/>
            <person name="Perna N.T."/>
            <person name="Plunkett G. III"/>
            <person name="Rudd K.E."/>
            <person name="Serres M.H."/>
            <person name="Thomas G.H."/>
            <person name="Thomson N.R."/>
            <person name="Wishart D."/>
            <person name="Wanner B.L."/>
        </authorList>
    </citation>
    <scope>SEQUENCE REVISION</scope>
</reference>
<reference key="4">
    <citation type="journal article" date="2006" name="Mol. Syst. Biol.">
        <title>Highly accurate genome sequences of Escherichia coli K-12 strains MG1655 and W3110.</title>
        <authorList>
            <person name="Hayashi K."/>
            <person name="Morooka N."/>
            <person name="Yamamoto Y."/>
            <person name="Fujita K."/>
            <person name="Isono K."/>
            <person name="Choi S."/>
            <person name="Ohtsubo E."/>
            <person name="Baba T."/>
            <person name="Wanner B.L."/>
            <person name="Mori H."/>
            <person name="Horiuchi T."/>
        </authorList>
    </citation>
    <scope>NUCLEOTIDE SEQUENCE [LARGE SCALE GENOMIC DNA]</scope>
    <source>
        <strain>K12 / W3110 / ATCC 27325 / DSM 5911</strain>
    </source>
</reference>
<reference key="5">
    <citation type="journal article" date="1977" name="FEBS Lett.">
        <title>D-galactonate utilisation by enteric bacteria. The catabolic pathway in Escherichia coli.</title>
        <authorList>
            <person name="Deacon J."/>
            <person name="Cooper R.A."/>
        </authorList>
    </citation>
    <scope>FUNCTION</scope>
    <scope>INDUCTION</scope>
</reference>
<reference key="6">
    <citation type="journal article" date="2019" name="J. Bacteriol.">
        <title>Molecular and functional insights into the regulation of D-galactonate metabolism by the transcriptional regulator DgoR in Escherichia coli.</title>
        <authorList>
            <person name="Singh B."/>
            <person name="Arya G."/>
            <person name="Kundu N."/>
            <person name="Sangwan A."/>
            <person name="Nongthombam S."/>
            <person name="Chaba R."/>
        </authorList>
    </citation>
    <scope>INDUCTION</scope>
    <scope>OPERON</scope>
    <scope>DISRUPTION PHENOTYPE</scope>
</reference>
<reference evidence="6 7" key="7">
    <citation type="journal article" date="2008" name="Bioorg. Med. Chem.">
        <title>Characterization and crystal structure of Escherichia coli KDPGal aldolase.</title>
        <authorList>
            <person name="Walters M.J."/>
            <person name="Srikannathasan V."/>
            <person name="McEwan A.R."/>
            <person name="Naismith J.H."/>
            <person name="Fierke C.A."/>
            <person name="Toone E.J."/>
        </authorList>
    </citation>
    <scope>X-RAY CRYSTALLOGRAPHY (2.4 ANGSTROMS) IN COMPLEX WITH 2-KETO-DEOXY-GALACTOSE</scope>
    <scope>FUNCTION</scope>
    <scope>CATALYTIC ACTIVITY</scope>
    <scope>MUTAGENESIS OF GLU-37 AND VAL-154</scope>
    <scope>ACTIVE SITE</scope>
    <scope>BIOPHYSICOCHEMICAL PROPERTIES</scope>
    <scope>MASS SPECTROMETRY</scope>
    <scope>SUBSTRATE SPECIFICITY</scope>
    <scope>SUBUNIT</scope>
</reference>
<accession>Q6BF16</accession>
<accession>P31458</accession>
<accession>Q2M805</accession>
<protein>
    <recommendedName>
        <fullName>2-dehydro-3-deoxy-6-phosphogalactonate aldolase</fullName>
        <ecNumber evidence="1">4.1.2.21</ecNumber>
    </recommendedName>
    <alternativeName>
        <fullName>2-oxo-3-deoxygalactonate 6-phosphate aldolase</fullName>
    </alternativeName>
    <alternativeName>
        <fullName>6-phospho-2-dehydro-3-deoxygalactonate aldolase</fullName>
    </alternativeName>
    <alternativeName>
        <fullName>6-phospho-2-keto-3-deoxygalactonate aldolase</fullName>
        <shortName>KDPGal aldolase</shortName>
    </alternativeName>
</protein>
<feature type="chain" id="PRO_0000079880" description="2-dehydro-3-deoxy-6-phosphogalactonate aldolase">
    <location>
        <begin position="1"/>
        <end position="205"/>
    </location>
</feature>
<feature type="active site" description="Proton donor/acceptor" evidence="5">
    <location>
        <position position="37"/>
    </location>
</feature>
<feature type="active site" description="Schiff-base intermediate with substrate" evidence="1">
    <location>
        <position position="126"/>
    </location>
</feature>
<feature type="binding site" evidence="5 7">
    <location>
        <position position="14"/>
    </location>
    <ligand>
        <name>2-dehydro-3-deoxy-6-phospho-D-galactonate</name>
        <dbReference type="ChEBI" id="CHEBI:58298"/>
    </ligand>
</feature>
<feature type="binding site" evidence="5 7">
    <location>
        <position position="66"/>
    </location>
    <ligand>
        <name>2-dehydro-3-deoxy-6-phospho-D-galactonate</name>
        <dbReference type="ChEBI" id="CHEBI:58298"/>
    </ligand>
</feature>
<feature type="binding site" description="covalent" evidence="5 7">
    <location>
        <position position="126"/>
    </location>
    <ligand>
        <name>2-dehydro-3-deoxy-6-phospho-D-galactonate</name>
        <dbReference type="ChEBI" id="CHEBI:58298"/>
    </ligand>
</feature>
<feature type="binding site" evidence="5 7">
    <location>
        <position position="156"/>
    </location>
    <ligand>
        <name>2-dehydro-3-deoxy-6-phospho-D-galactonate</name>
        <dbReference type="ChEBI" id="CHEBI:58298"/>
    </ligand>
</feature>
<feature type="binding site" evidence="5 7">
    <location>
        <position position="176"/>
    </location>
    <ligand>
        <name>2-dehydro-3-deoxy-6-phospho-D-galactonate</name>
        <dbReference type="ChEBI" id="CHEBI:58298"/>
    </ligand>
</feature>
<feature type="binding site" evidence="5 7">
    <location>
        <position position="177"/>
    </location>
    <ligand>
        <name>2-dehydro-3-deoxy-6-phospho-D-galactonate</name>
        <dbReference type="ChEBI" id="CHEBI:58298"/>
    </ligand>
</feature>
<feature type="site" description="Orients the nucleophilic substrate">
    <location>
        <position position="14"/>
    </location>
</feature>
<feature type="site" description="Plays a major role in determining the stereoselectivity">
    <location>
        <position position="154"/>
    </location>
</feature>
<feature type="mutagenesis site" description="50-fold decrease in catalytic efficiency and 6-fold decrease of binding affinity." evidence="1">
    <original>E</original>
    <variation>N</variation>
    <location>
        <position position="37"/>
    </location>
</feature>
<feature type="mutagenesis site" description="Little stereoselectivity, accepting KDPG and KDPGal as substrate with roughly equal efficacy. Reduced the preference for KDPGal. It diminishes the activity against KDPGal and increases activity against KDPG." evidence="1">
    <original>V</original>
    <variation>T</variation>
    <location>
        <position position="154"/>
    </location>
</feature>
<feature type="strand" evidence="9">
    <location>
        <begin position="5"/>
        <end position="7"/>
    </location>
</feature>
<feature type="strand" evidence="9">
    <location>
        <begin position="9"/>
        <end position="12"/>
    </location>
</feature>
<feature type="helix" evidence="9">
    <location>
        <begin position="18"/>
        <end position="31"/>
    </location>
</feature>
<feature type="strand" evidence="9">
    <location>
        <begin position="35"/>
        <end position="39"/>
    </location>
</feature>
<feature type="helix" evidence="9">
    <location>
        <begin position="45"/>
        <end position="56"/>
    </location>
</feature>
<feature type="turn" evidence="9">
    <location>
        <begin position="57"/>
        <end position="59"/>
    </location>
</feature>
<feature type="strand" evidence="9">
    <location>
        <begin position="60"/>
        <end position="65"/>
    </location>
</feature>
<feature type="helix" evidence="9">
    <location>
        <begin position="70"/>
        <end position="78"/>
    </location>
</feature>
<feature type="strand" evidence="9">
    <location>
        <begin position="83"/>
        <end position="85"/>
    </location>
</feature>
<feature type="helix" evidence="9">
    <location>
        <begin position="91"/>
        <end position="99"/>
    </location>
</feature>
<feature type="strand" evidence="9">
    <location>
        <begin position="103"/>
        <end position="105"/>
    </location>
</feature>
<feature type="strand" evidence="8">
    <location>
        <begin position="107"/>
        <end position="110"/>
    </location>
</feature>
<feature type="helix" evidence="9">
    <location>
        <begin position="111"/>
        <end position="119"/>
    </location>
</feature>
<feature type="strand" evidence="9">
    <location>
        <begin position="123"/>
        <end position="127"/>
    </location>
</feature>
<feature type="helix" evidence="9">
    <location>
        <begin position="130"/>
        <end position="133"/>
    </location>
</feature>
<feature type="helix" evidence="9">
    <location>
        <begin position="135"/>
        <end position="142"/>
    </location>
</feature>
<feature type="strand" evidence="9">
    <location>
        <begin position="150"/>
        <end position="156"/>
    </location>
</feature>
<feature type="turn" evidence="9">
    <location>
        <begin position="159"/>
        <end position="161"/>
    </location>
</feature>
<feature type="helix" evidence="9">
    <location>
        <begin position="162"/>
        <end position="168"/>
    </location>
</feature>
<feature type="strand" evidence="9">
    <location>
        <begin position="171"/>
        <end position="175"/>
    </location>
</feature>
<feature type="turn" evidence="9">
    <location>
        <begin position="177"/>
        <end position="179"/>
    </location>
</feature>
<feature type="helix" evidence="9">
    <location>
        <begin position="186"/>
        <end position="205"/>
    </location>
</feature>
<proteinExistence type="evidence at protein level"/>
<comment type="function">
    <text evidence="1 3">Involved in the degradation of galactose via the DeLey-Doudoroff pathway. Catalyzes the reversible, stereospecific retro-aldol cleavage of 2-keto-3-deoxy-6-phosphogalactonate (KDPGal) to pyruvate and D-glyceraldehyde-3-phosphate. In the synthetic direction, it catalyzes the addition of pyruvate to electrophilic aldehydes with re-facial selectivity. It can use a limited number of aldehyde substrates, including D-glyceraldehyde-3-phosphate (natural substrate), D-glyceraldehyde, glycolaldehyde, 2-pyridinecarboxaldehyde, D-ribose, D-erythrose and D-threose. It efficiently catalyzes aldol addition only using pyruvate as the nucleophilic component and accepts both stereochemical configurations at C2 of the electrophile.</text>
</comment>
<comment type="catalytic activity">
    <reaction evidence="1">
        <text>2-dehydro-3-deoxy-6-phospho-D-galactonate = D-glyceraldehyde 3-phosphate + pyruvate</text>
        <dbReference type="Rhea" id="RHEA:24464"/>
        <dbReference type="ChEBI" id="CHEBI:15361"/>
        <dbReference type="ChEBI" id="CHEBI:58298"/>
        <dbReference type="ChEBI" id="CHEBI:59776"/>
        <dbReference type="EC" id="4.1.2.21"/>
    </reaction>
</comment>
<comment type="biophysicochemical properties">
    <kinetics>
        <KM evidence="1">0.2 mM for KDPGal</KM>
        <text evidence="1">kcat is 4 sec(-1) with KDPGal as substrate.</text>
    </kinetics>
</comment>
<comment type="pathway">
    <text>Carbohydrate acid metabolism; D-galactonate degradation; D-glyceraldehyde 3-phosphate and pyruvate from D-galactonate: step 3/3.</text>
</comment>
<comment type="subunit">
    <text evidence="1">Homotrimer.</text>
</comment>
<comment type="induction">
    <text evidence="2 3">Part of the dgoRKADT operon, which encodes proteins for the metabolism of D-galactonate (PubMed:30455279). Negatively regulated by DgoR (PubMed:30455279). Expression is induced in the presence of D-galactonate and galactose (PubMed:30455279, PubMed:324806).</text>
</comment>
<comment type="mass spectrometry"/>
<comment type="disruption phenotype">
    <text evidence="2">Deletion mutant cannot grow on D-galactonate.</text>
</comment>
<comment type="similarity">
    <text evidence="4">Belongs to the KHG/KDPG aldolase family.</text>
</comment>
<comment type="sequence caution" evidence="4">
    <conflict type="frameshift">
        <sequence resource="EMBL-CDS" id="AAA62044"/>
    </conflict>
    <text>The frameshift in position 204 caused the prediction of an ORF that fused dgoA and dgoD.</text>
</comment>